<evidence type="ECO:0000250" key="1">
    <source>
        <dbReference type="UniProtKB" id="P61793"/>
    </source>
</evidence>
<evidence type="ECO:0000250" key="2">
    <source>
        <dbReference type="UniProtKB" id="Q92633"/>
    </source>
</evidence>
<evidence type="ECO:0000255" key="3"/>
<evidence type="ECO:0000255" key="4">
    <source>
        <dbReference type="PROSITE-ProRule" id="PRU00521"/>
    </source>
</evidence>
<evidence type="ECO:0000256" key="5">
    <source>
        <dbReference type="SAM" id="MobiDB-lite"/>
    </source>
</evidence>
<evidence type="ECO:0000269" key="6">
    <source>
    </source>
</evidence>
<evidence type="ECO:0000303" key="7">
    <source>
    </source>
</evidence>
<organism>
    <name type="scientific">Ovis aries</name>
    <name type="common">Sheep</name>
    <dbReference type="NCBI Taxonomy" id="9940"/>
    <lineage>
        <taxon>Eukaryota</taxon>
        <taxon>Metazoa</taxon>
        <taxon>Chordata</taxon>
        <taxon>Craniata</taxon>
        <taxon>Vertebrata</taxon>
        <taxon>Euteleostomi</taxon>
        <taxon>Mammalia</taxon>
        <taxon>Eutheria</taxon>
        <taxon>Laurasiatheria</taxon>
        <taxon>Artiodactyla</taxon>
        <taxon>Ruminantia</taxon>
        <taxon>Pecora</taxon>
        <taxon>Bovidae</taxon>
        <taxon>Caprinae</taxon>
        <taxon>Ovis</taxon>
    </lineage>
</organism>
<gene>
    <name type="primary">LPAR1</name>
    <name evidence="7" type="synonym">EDG-2</name>
    <name type="synonym">EDG2</name>
    <name type="synonym">LPA1</name>
</gene>
<reference key="1">
    <citation type="journal article" date="1995" name="Recept. Channels">
        <title>Cloning and characterization of a new member of the G-protein coupled receptor EDG family.</title>
        <authorList>
            <person name="Masana M.I."/>
            <person name="Brown R.C."/>
            <person name="Pu H."/>
            <person name="Gurney M.E."/>
            <person name="Dubocovich M.L."/>
        </authorList>
    </citation>
    <scope>NUCLEOTIDE SEQUENCE [MRNA]</scope>
    <scope>TISSUE SPECIFICITY</scope>
    <source>
        <tissue>Pituitary pars tuberalis</tissue>
    </source>
</reference>
<proteinExistence type="evidence at transcript level"/>
<feature type="chain" id="PRO_0000069420" description="Lysophosphatidic acid receptor 1">
    <location>
        <begin position="1"/>
        <end position="393"/>
    </location>
</feature>
<feature type="topological domain" description="Extracellular" evidence="2">
    <location>
        <begin position="1"/>
        <end position="50"/>
    </location>
</feature>
<feature type="transmembrane region" description="Helical; Name=1" evidence="2">
    <location>
        <begin position="51"/>
        <end position="75"/>
    </location>
</feature>
<feature type="topological domain" description="Cytoplasmic" evidence="2">
    <location>
        <begin position="76"/>
        <end position="83"/>
    </location>
</feature>
<feature type="transmembrane region" description="Helical; Name=2" evidence="2">
    <location>
        <begin position="84"/>
        <end position="107"/>
    </location>
</feature>
<feature type="topological domain" description="Extracellular" evidence="2">
    <location>
        <begin position="108"/>
        <end position="121"/>
    </location>
</feature>
<feature type="transmembrane region" description="Helical; Name=3" evidence="2">
    <location>
        <begin position="122"/>
        <end position="144"/>
    </location>
</feature>
<feature type="topological domain" description="Cytoplasmic" evidence="2">
    <location>
        <begin position="145"/>
        <end position="163"/>
    </location>
</feature>
<feature type="transmembrane region" description="Helical; Name=4" evidence="2">
    <location>
        <begin position="164"/>
        <end position="184"/>
    </location>
</feature>
<feature type="topological domain" description="Extracellular" evidence="2">
    <location>
        <begin position="185"/>
        <end position="204"/>
    </location>
</feature>
<feature type="transmembrane region" description="Helical; Name=5" evidence="2">
    <location>
        <begin position="205"/>
        <end position="225"/>
    </location>
</feature>
<feature type="topological domain" description="Cytoplasmic" evidence="2">
    <location>
        <begin position="226"/>
        <end position="255"/>
    </location>
</feature>
<feature type="transmembrane region" description="Helical; Name=6" evidence="2">
    <location>
        <begin position="256"/>
        <end position="280"/>
    </location>
</feature>
<feature type="topological domain" description="Extracellular" evidence="2">
    <location>
        <begin position="281"/>
        <end position="294"/>
    </location>
</feature>
<feature type="transmembrane region" description="Helical; Name=7" evidence="2">
    <location>
        <begin position="295"/>
        <end position="315"/>
    </location>
</feature>
<feature type="topological domain" description="Cytoplasmic" evidence="2">
    <location>
        <begin position="316"/>
        <end position="393"/>
    </location>
</feature>
<feature type="region of interest" description="Disordered" evidence="5">
    <location>
        <begin position="369"/>
        <end position="393"/>
    </location>
</feature>
<feature type="compositionally biased region" description="Basic and acidic residues" evidence="5">
    <location>
        <begin position="369"/>
        <end position="381"/>
    </location>
</feature>
<feature type="binding site" evidence="2">
    <location>
        <position position="39"/>
    </location>
    <ligand>
        <name>a 1-acyl-sn-glycero-3-phosphate</name>
        <dbReference type="ChEBI" id="CHEBI:57970"/>
    </ligand>
</feature>
<feature type="binding site" evidence="2">
    <location>
        <begin position="124"/>
        <end position="129"/>
    </location>
    <ligand>
        <name>a 1-acyl-sn-glycero-3-phosphate</name>
        <dbReference type="ChEBI" id="CHEBI:57970"/>
    </ligand>
</feature>
<feature type="binding site" evidence="2">
    <location>
        <position position="210"/>
    </location>
    <ligand>
        <name>a 1-acyl-sn-glycero-3-phosphate</name>
        <dbReference type="ChEBI" id="CHEBI:57970"/>
    </ligand>
</feature>
<feature type="modified residue" description="Phosphoserine" evidence="2">
    <location>
        <position position="341"/>
    </location>
</feature>
<feature type="modified residue" description="Phosphothreonine" evidence="1">
    <location>
        <position position="351"/>
    </location>
</feature>
<feature type="glycosylation site" description="N-linked (GlcNAc...) asparagine" evidence="3">
    <location>
        <position position="27"/>
    </location>
</feature>
<feature type="glycosylation site" description="N-linked (GlcNAc...) asparagine" evidence="3">
    <location>
        <position position="35"/>
    </location>
</feature>
<feature type="disulfide bond" evidence="2">
    <location>
        <begin position="24"/>
        <end position="190"/>
    </location>
</feature>
<feature type="disulfide bond" evidence="2">
    <location>
        <begin position="188"/>
        <end position="195"/>
    </location>
</feature>
<feature type="disulfide bond" evidence="2">
    <location>
        <begin position="284"/>
        <end position="287"/>
    </location>
</feature>
<accession>P46628</accession>
<sequence length="393" mass="44433">MAAASTSSPVVSQPQFTAMNEPQCFYNESIAFFYNRSGKYLATEWNTVSKLVMGLGITVCIFIMLANLLVMVAIYVNRRFHFPIYYLMANLAAADFFAGLAYFYLMFNTGPNTRRLTVSTWLLRQGLIDTTVTASVANLLAIAIERHITVFRMQLHTRMSNRRVVVVIVVIWTMAIVMGAIPSVGWNCICDIENCSNMAPLYSDSYLVFWAIFNLVTFVVMVVLYAHIFGYVRQRTMRMSRHSSGPRRNRDTMMSLLKTVVIVLGAFIICWTPGLVLLLLDVCCPQCDVLAYEKFFLLLAEFNSAMNPIIYSYRDKEMSATFRQILCCQRSENTSGPTEGSDRSASSLNHTILAGVHSNDHSVFRKETKMRGGHHLLRDEQPPPPERPGQGRV</sequence>
<name>LPAR1_SHEEP</name>
<comment type="function">
    <text evidence="1 2">Receptor for lysophosphatidic acid (LPA). Plays a role in the reorganization of the actin cytoskeleton, cell migration, differentiation and proliferation, and thereby contributes to the responses to tissue damage and infectious agents. Activates downstream signaling cascades via the G(i)/G(o), G(12)/G(13), and G(q) families of heteromeric G proteins. Signaling inhibits adenylyl cyclase activity and decreases cellular cAMP levels. Signaling triggers an increase of cytoplasmic Ca(2+) levels. Activates RALA; this leads to the activation of phospholipase C (PLC) and the formation of inositol 1,4,5-trisphosphate. Signaling mediates activation of down-stream MAP kinases. Contributes to the regulation of cell shape. Promotes Rho-dependent reorganization of the actin cytoskeleton in neuronal cells and neurite retraction. Promotes the activation of Rho and the formation of actin stress fibers. Promotes formation of lamellipodia at the leading edge of migrating cells via activation of RAC1. Through its function as LPA receptor, plays a role in chemotaxis and cell migration, including responses to injury and wounding. Plays a role in triggering inflammation in response to bacterial lipopolysaccharide (LPS) via its interaction with CD14. Promotes cell proliferation in response to LPA. Inhibits the intracellular ciliogenesis pathway in response to LPA and through AKT1 activation (By similarity). Required for normal skeleton development. May play a role in osteoblast differentiation. Required for normal brain development. Required for normal proliferation, survival and maturation of newly formed neurons in the adult dentate gyrus. Plays a role in pain perception and in the initiation of neuropathic pain.</text>
</comment>
<comment type="subunit">
    <text evidence="1 2">Interacts with RALA and GRK2 (By similarity). Interacts with GNAQ and GNA13. Interacts with CD14; the interaction is enhanced by exposure to bacterial lipopolysaccharide (LPS) (By similarity).</text>
</comment>
<comment type="subcellular location">
    <subcellularLocation>
        <location evidence="1">Cell surface</location>
    </subcellularLocation>
    <subcellularLocation>
        <location evidence="1">Cell membrane</location>
        <topology evidence="2">Multi-pass membrane protein</topology>
    </subcellularLocation>
    <subcellularLocation>
        <location evidence="1 2">Endosome</location>
    </subcellularLocation>
    <text evidence="1 2">Prior to LPA treatment found predominantly at the cell surface. Internalized after LPA treatment. Colocalizes with RALA in endocytic vesicles after LPA treatment.</text>
</comment>
<comment type="tissue specificity">
    <text evidence="6">Detected in brain cortex and in pituitary pars tuberalis.</text>
</comment>
<comment type="PTM">
    <text evidence="2">N-glycosylated.</text>
</comment>
<comment type="similarity">
    <text evidence="4">Belongs to the G-protein coupled receptor 1 family.</text>
</comment>
<protein>
    <recommendedName>
        <fullName>Lysophosphatidic acid receptor 1</fullName>
        <shortName>LPA receptor 1</shortName>
        <shortName>LPA-1</shortName>
    </recommendedName>
    <alternativeName>
        <fullName>Lysophosphatidic acid receptor Edg-2</fullName>
    </alternativeName>
</protein>
<dbReference type="EMBL" id="U18405">
    <property type="protein sequence ID" value="AAB52368.1"/>
    <property type="molecule type" value="mRNA"/>
</dbReference>
<dbReference type="RefSeq" id="NP_001009332.1">
    <property type="nucleotide sequence ID" value="NM_001009332.1"/>
</dbReference>
<dbReference type="SMR" id="P46628"/>
<dbReference type="STRING" id="9940.ENSOARP00000007239"/>
<dbReference type="GlyCosmos" id="P46628">
    <property type="glycosylation" value="2 sites, No reported glycans"/>
</dbReference>
<dbReference type="PaxDb" id="9940-ENSOARP00000007239"/>
<dbReference type="GeneID" id="443346"/>
<dbReference type="KEGG" id="oas:443346"/>
<dbReference type="CTD" id="1902"/>
<dbReference type="eggNOG" id="KOG3656">
    <property type="taxonomic scope" value="Eukaryota"/>
</dbReference>
<dbReference type="OrthoDB" id="5987098at2759"/>
<dbReference type="Proteomes" id="UP000002356">
    <property type="component" value="Unplaced"/>
</dbReference>
<dbReference type="GO" id="GO:0009986">
    <property type="term" value="C:cell surface"/>
    <property type="evidence" value="ECO:0000250"/>
    <property type="project" value="UniProtKB"/>
</dbReference>
<dbReference type="GO" id="GO:0005768">
    <property type="term" value="C:endosome"/>
    <property type="evidence" value="ECO:0007669"/>
    <property type="project" value="UniProtKB-SubCell"/>
</dbReference>
<dbReference type="GO" id="GO:0005886">
    <property type="term" value="C:plasma membrane"/>
    <property type="evidence" value="ECO:0000250"/>
    <property type="project" value="UniProtKB"/>
</dbReference>
<dbReference type="GO" id="GO:0070915">
    <property type="term" value="F:lysophosphatidic acid receptor activity"/>
    <property type="evidence" value="ECO:0000250"/>
    <property type="project" value="UniProtKB"/>
</dbReference>
<dbReference type="GO" id="GO:0007193">
    <property type="term" value="P:adenylate cyclase-inhibiting G protein-coupled receptor signaling pathway"/>
    <property type="evidence" value="ECO:0000250"/>
    <property type="project" value="UniProtKB"/>
</dbReference>
<dbReference type="GO" id="GO:1902018">
    <property type="term" value="P:negative regulation of cilium assembly"/>
    <property type="evidence" value="ECO:0000250"/>
    <property type="project" value="UniProtKB"/>
</dbReference>
<dbReference type="GO" id="GO:0010977">
    <property type="term" value="P:negative regulation of neuron projection development"/>
    <property type="evidence" value="ECO:0000250"/>
    <property type="project" value="UniProtKB"/>
</dbReference>
<dbReference type="GO" id="GO:0043410">
    <property type="term" value="P:positive regulation of MAPK cascade"/>
    <property type="evidence" value="ECO:0000250"/>
    <property type="project" value="UniProtKB"/>
</dbReference>
<dbReference type="GO" id="GO:0035025">
    <property type="term" value="P:positive regulation of Rho protein signal transduction"/>
    <property type="evidence" value="ECO:0000250"/>
    <property type="project" value="UniProtKB"/>
</dbReference>
<dbReference type="GO" id="GO:0051496">
    <property type="term" value="P:positive regulation of stress fiber assembly"/>
    <property type="evidence" value="ECO:0000250"/>
    <property type="project" value="UniProtKB"/>
</dbReference>
<dbReference type="GO" id="GO:0008360">
    <property type="term" value="P:regulation of cell shape"/>
    <property type="evidence" value="ECO:0000250"/>
    <property type="project" value="UniProtKB"/>
</dbReference>
<dbReference type="CDD" id="cd15344">
    <property type="entry name" value="7tmA_LPAR1_Edg2"/>
    <property type="match status" value="1"/>
</dbReference>
<dbReference type="FunFam" id="1.20.1070.10:FF:000025">
    <property type="entry name" value="Lysophosphatidic acid receptor 1"/>
    <property type="match status" value="1"/>
</dbReference>
<dbReference type="Gene3D" id="1.20.1070.10">
    <property type="entry name" value="Rhodopsin 7-helix transmembrane proteins"/>
    <property type="match status" value="1"/>
</dbReference>
<dbReference type="InterPro" id="IPR000276">
    <property type="entry name" value="GPCR_Rhodpsn"/>
</dbReference>
<dbReference type="InterPro" id="IPR017452">
    <property type="entry name" value="GPCR_Rhodpsn_7TM"/>
</dbReference>
<dbReference type="InterPro" id="IPR004065">
    <property type="entry name" value="LPA_rcpt"/>
</dbReference>
<dbReference type="InterPro" id="IPR002277">
    <property type="entry name" value="LPA_rcpt_EDG2"/>
</dbReference>
<dbReference type="PANTHER" id="PTHR22750">
    <property type="entry name" value="G-PROTEIN COUPLED RECEPTOR"/>
    <property type="match status" value="1"/>
</dbReference>
<dbReference type="Pfam" id="PF00001">
    <property type="entry name" value="7tm_1"/>
    <property type="match status" value="1"/>
</dbReference>
<dbReference type="PRINTS" id="PR01148">
    <property type="entry name" value="EDG2RECEPTOR"/>
</dbReference>
<dbReference type="PRINTS" id="PR00237">
    <property type="entry name" value="GPCRRHODOPSN"/>
</dbReference>
<dbReference type="PRINTS" id="PR01527">
    <property type="entry name" value="LPARECEPTOR"/>
</dbReference>
<dbReference type="SMART" id="SM01381">
    <property type="entry name" value="7TM_GPCR_Srsx"/>
    <property type="match status" value="1"/>
</dbReference>
<dbReference type="SUPFAM" id="SSF81321">
    <property type="entry name" value="Family A G protein-coupled receptor-like"/>
    <property type="match status" value="1"/>
</dbReference>
<dbReference type="PROSITE" id="PS00237">
    <property type="entry name" value="G_PROTEIN_RECEP_F1_1"/>
    <property type="match status" value="1"/>
</dbReference>
<dbReference type="PROSITE" id="PS50262">
    <property type="entry name" value="G_PROTEIN_RECEP_F1_2"/>
    <property type="match status" value="1"/>
</dbReference>
<keyword id="KW-1003">Cell membrane</keyword>
<keyword id="KW-1015">Disulfide bond</keyword>
<keyword id="KW-0967">Endosome</keyword>
<keyword id="KW-0297">G-protein coupled receptor</keyword>
<keyword id="KW-0325">Glycoprotein</keyword>
<keyword id="KW-0472">Membrane</keyword>
<keyword id="KW-0597">Phosphoprotein</keyword>
<keyword id="KW-0675">Receptor</keyword>
<keyword id="KW-1185">Reference proteome</keyword>
<keyword id="KW-0807">Transducer</keyword>
<keyword id="KW-0812">Transmembrane</keyword>
<keyword id="KW-1133">Transmembrane helix</keyword>